<accession>A0A0B5KYT4</accession>
<sequence>MESLSLTWITAIAVVLYLVQRYVRSYWRLKDIPGPVLAKLTDLQRVWWVKTGRAHEFHRDMHAMYGPIVRFGPNMVSVSDPRVIPTIYPSRPGFPKGDFYRTQKPYTRNKGAMPAVFNTQDEDLHKQLRSPIASLYSMTNVVRLEPLVDETLTVLSKQLDERFVGTNDKPFDLGDWLQYFAFDSMGTLTFSRRYGFLEQGRDMHGILQEIWNFMTRVAVMGQIPWFDEIWNKNSFITLFKRPTGFGVLKVVDNFISQRVSSRENDEKADEKDMLSQFLNIQASNPHSIMPWAPRAWTFSNVMAGSDSTANVMRTMMYNLLVDRDTLKSLRAELLEAESSNGLSRSLPSWDGVRSLPYLDACVLEALRLHPPFCLPFERVVPEGGITVCETYLPAGTVVGISPYLANRDKQTFGDDADKWRPSRWLDLSREDRVKLENSILTFGAGRRTCLGKNIAILEIKKLFPMLLLNYEIEIVNPENYQTTNAWFFRQWGLHAVIRKLPAPERDDTIEQKASIPPALNIPPSSSTVDVRIIDSGTLLDLRPDLFWTPDLPGLLKVTAPTYCFLISNGSRHVLFDLAVRQDWENLPPSIVAMIKSQTVIQEPRNISDVLDSDESSLGIRSKDIEAIIWSHAHFDHIGDPSTFPPSTELVVGPGIRDTHWPGFPTNPDAINLNTDIQGRNVREISFEKTQKGATKIGSFDAMDYFGDGSFYLLDAAGHSVGHIGALARVTTSPDSFVFMGGDSCHHAGVLRPTKYLPCPLDSGDTSLPCKSDSVFTLSPALPTDYTAALRTVENIKELDACEDVFVVLAHDATLKGKVDFYPSKINDWKAKEYGKKTKWLFYKDIENAIEGQK</sequence>
<name>MPDE2_PENBR</name>
<proteinExistence type="evidence at protein level"/>
<dbReference type="EC" id="1.-.-.-" evidence="3"/>
<dbReference type="EMBL" id="KM595305">
    <property type="protein sequence ID" value="AJG44382.1"/>
    <property type="molecule type" value="Genomic_DNA"/>
</dbReference>
<dbReference type="SMR" id="A0A0B5KYT4"/>
<dbReference type="OrthoDB" id="3934656at2759"/>
<dbReference type="UniPathway" id="UPA00213"/>
<dbReference type="GO" id="GO:0005783">
    <property type="term" value="C:endoplasmic reticulum"/>
    <property type="evidence" value="ECO:0000314"/>
    <property type="project" value="UniProt"/>
</dbReference>
<dbReference type="GO" id="GO:0005789">
    <property type="term" value="C:endoplasmic reticulum membrane"/>
    <property type="evidence" value="ECO:0000314"/>
    <property type="project" value="GO_Central"/>
</dbReference>
<dbReference type="GO" id="GO:0020037">
    <property type="term" value="F:heme binding"/>
    <property type="evidence" value="ECO:0007669"/>
    <property type="project" value="InterPro"/>
</dbReference>
<dbReference type="GO" id="GO:0005506">
    <property type="term" value="F:iron ion binding"/>
    <property type="evidence" value="ECO:0007669"/>
    <property type="project" value="InterPro"/>
</dbReference>
<dbReference type="GO" id="GO:0004497">
    <property type="term" value="F:monooxygenase activity"/>
    <property type="evidence" value="ECO:0000314"/>
    <property type="project" value="GO_Central"/>
</dbReference>
<dbReference type="GO" id="GO:0016705">
    <property type="term" value="F:oxidoreductase activity, acting on paired donors, with incorporation or reduction of molecular oxygen"/>
    <property type="evidence" value="ECO:0007669"/>
    <property type="project" value="InterPro"/>
</dbReference>
<dbReference type="GO" id="GO:0016218">
    <property type="term" value="F:polyketide synthase activity"/>
    <property type="evidence" value="ECO:0000314"/>
    <property type="project" value="UniProt"/>
</dbReference>
<dbReference type="GO" id="GO:0140722">
    <property type="term" value="P:mycophenolic acid biosynthetic process"/>
    <property type="evidence" value="ECO:0000314"/>
    <property type="project" value="GO_Central"/>
</dbReference>
<dbReference type="GO" id="GO:0016114">
    <property type="term" value="P:terpenoid biosynthetic process"/>
    <property type="evidence" value="ECO:0007669"/>
    <property type="project" value="UniProtKB-UniPathway"/>
</dbReference>
<dbReference type="CDD" id="cd11060">
    <property type="entry name" value="CYP57A1-like"/>
    <property type="match status" value="1"/>
</dbReference>
<dbReference type="CDD" id="cd07730">
    <property type="entry name" value="metallo-hydrolase-like_MBL-fold"/>
    <property type="match status" value="1"/>
</dbReference>
<dbReference type="Gene3D" id="1.10.630.10">
    <property type="entry name" value="Cytochrome P450"/>
    <property type="match status" value="1"/>
</dbReference>
<dbReference type="Gene3D" id="3.60.15.10">
    <property type="entry name" value="Ribonuclease Z/Hydroxyacylglutathione hydrolase-like"/>
    <property type="match status" value="1"/>
</dbReference>
<dbReference type="InterPro" id="IPR001128">
    <property type="entry name" value="Cyt_P450"/>
</dbReference>
<dbReference type="InterPro" id="IPR017972">
    <property type="entry name" value="Cyt_P450_CS"/>
</dbReference>
<dbReference type="InterPro" id="IPR002403">
    <property type="entry name" value="Cyt_P450_E_grp-IV"/>
</dbReference>
<dbReference type="InterPro" id="IPR036396">
    <property type="entry name" value="Cyt_P450_sf"/>
</dbReference>
<dbReference type="InterPro" id="IPR050121">
    <property type="entry name" value="Cytochrome_P450_monoxygenase"/>
</dbReference>
<dbReference type="InterPro" id="IPR001279">
    <property type="entry name" value="Metallo-B-lactamas"/>
</dbReference>
<dbReference type="InterPro" id="IPR036866">
    <property type="entry name" value="RibonucZ/Hydroxyglut_hydro"/>
</dbReference>
<dbReference type="PANTHER" id="PTHR24305">
    <property type="entry name" value="CYTOCHROME P450"/>
    <property type="match status" value="1"/>
</dbReference>
<dbReference type="PANTHER" id="PTHR24305:SF175">
    <property type="entry name" value="CYTOCHROME P450 MONOOXYGENASE PKFB"/>
    <property type="match status" value="1"/>
</dbReference>
<dbReference type="Pfam" id="PF00753">
    <property type="entry name" value="Lactamase_B"/>
    <property type="match status" value="1"/>
</dbReference>
<dbReference type="Pfam" id="PF00067">
    <property type="entry name" value="p450"/>
    <property type="match status" value="1"/>
</dbReference>
<dbReference type="PRINTS" id="PR00465">
    <property type="entry name" value="EP450IV"/>
</dbReference>
<dbReference type="PRINTS" id="PR00385">
    <property type="entry name" value="P450"/>
</dbReference>
<dbReference type="SUPFAM" id="SSF48264">
    <property type="entry name" value="Cytochrome P450"/>
    <property type="match status" value="1"/>
</dbReference>
<dbReference type="SUPFAM" id="SSF56281">
    <property type="entry name" value="Metallo-hydrolase/oxidoreductase"/>
    <property type="match status" value="1"/>
</dbReference>
<dbReference type="PROSITE" id="PS00086">
    <property type="entry name" value="CYTOCHROME_P450"/>
    <property type="match status" value="1"/>
</dbReference>
<protein>
    <recommendedName>
        <fullName evidence="4">Cytochrome P450 monooxygenase mpaDE'</fullName>
        <ecNumber evidence="3">1.-.-.-</ecNumber>
    </recommendedName>
    <alternativeName>
        <fullName evidence="4">Mycophenolic acid biosynthesis cluster protein DE'</fullName>
    </alternativeName>
</protein>
<reference key="1">
    <citation type="journal article" date="2015" name="ChemBioChem">
        <title>Functional characterization of MpaG', the O-methyltransferase involved in the biosynthesis of mycophenolic acid.</title>
        <authorList>
            <person name="Zhang W."/>
            <person name="Cao S."/>
            <person name="Qiu L."/>
            <person name="Qi F."/>
            <person name="Li Z."/>
            <person name="Yang Y."/>
            <person name="Huang S."/>
            <person name="Bai F."/>
            <person name="Liu C."/>
            <person name="Wan X."/>
            <person name="Li S."/>
        </authorList>
    </citation>
    <scope>NUCLEOTIDE SEQUENCE [GENOMIC DNA]</scope>
    <source>
        <strain>NRRL864</strain>
    </source>
</reference>
<reference key="2">
    <citation type="journal article" date="2019" name="Proc. Natl. Acad. Sci. U.S.A.">
        <title>Compartmentalized biosynthesis of mycophenolic acid.</title>
        <authorList>
            <person name="Zhang W."/>
            <person name="Du L."/>
            <person name="Qu Z."/>
            <person name="Zhang X."/>
            <person name="Li F."/>
            <person name="Li Z."/>
            <person name="Qi F."/>
            <person name="Wang X."/>
            <person name="Jiang Y."/>
            <person name="Men P."/>
            <person name="Sun J."/>
            <person name="Cao S."/>
            <person name="Geng C."/>
            <person name="Qi F."/>
            <person name="Wan X."/>
            <person name="Liu C."/>
            <person name="Li S."/>
        </authorList>
    </citation>
    <scope>FUNCTION</scope>
    <scope>SUBCELLULAR LOCATION</scope>
    <scope>CATALYTIC ACTIVITY</scope>
    <scope>PATHWAY</scope>
</reference>
<evidence type="ECO:0000250" key="1">
    <source>
        <dbReference type="UniProtKB" id="P04798"/>
    </source>
</evidence>
<evidence type="ECO:0000255" key="2"/>
<evidence type="ECO:0000269" key="3">
    <source>
    </source>
</evidence>
<evidence type="ECO:0000303" key="4">
    <source>
    </source>
</evidence>
<evidence type="ECO:0000305" key="5"/>
<evidence type="ECO:0000305" key="6">
    <source>
    </source>
</evidence>
<feature type="chain" id="PRO_0000451892" description="Cytochrome P450 monooxygenase mpaDE'" evidence="2">
    <location>
        <begin position="1"/>
        <end position="853"/>
    </location>
</feature>
<feature type="topological domain" description="Lumenal" evidence="5">
    <location>
        <begin position="1"/>
        <end position="6"/>
    </location>
</feature>
<feature type="transmembrane region" description="Helical" evidence="2">
    <location>
        <begin position="7"/>
        <end position="29"/>
    </location>
</feature>
<feature type="topological domain" description="Cytoplasmic" evidence="5">
    <location>
        <begin position="30"/>
        <end position="853"/>
    </location>
</feature>
<feature type="binding site" description="axial binding residue" evidence="1">
    <location>
        <position position="449"/>
    </location>
    <ligand>
        <name>heme</name>
        <dbReference type="ChEBI" id="CHEBI:30413"/>
    </ligand>
    <ligandPart>
        <name>Fe</name>
        <dbReference type="ChEBI" id="CHEBI:18248"/>
    </ligandPart>
</feature>
<keyword id="KW-0256">Endoplasmic reticulum</keyword>
<keyword id="KW-0349">Heme</keyword>
<keyword id="KW-0408">Iron</keyword>
<keyword id="KW-0472">Membrane</keyword>
<keyword id="KW-0479">Metal-binding</keyword>
<keyword id="KW-0503">Monooxygenase</keyword>
<keyword id="KW-0560">Oxidoreductase</keyword>
<keyword id="KW-0812">Transmembrane</keyword>
<keyword id="KW-1133">Transmembrane helix</keyword>
<organism>
    <name type="scientific">Penicillium brevicompactum</name>
    <dbReference type="NCBI Taxonomy" id="5074"/>
    <lineage>
        <taxon>Eukaryota</taxon>
        <taxon>Fungi</taxon>
        <taxon>Dikarya</taxon>
        <taxon>Ascomycota</taxon>
        <taxon>Pezizomycotina</taxon>
        <taxon>Eurotiomycetes</taxon>
        <taxon>Eurotiomycetidae</taxon>
        <taxon>Eurotiales</taxon>
        <taxon>Aspergillaceae</taxon>
        <taxon>Penicillium</taxon>
    </lineage>
</organism>
<gene>
    <name evidence="4" type="primary">mpaDE'</name>
</gene>
<comment type="function">
    <text evidence="3 6">Cytochrome P450 monooxygenase; part of the gene cluster that mediates the biosynthesis of mycophenolic acid (MPA), the first isolated antibiotic natural product in the world obtained from a culture of Penicillium brevicompactum in 1893 (PubMed:31209052). MpaDE' is an endoplasmic reticulum-bound enzyme that catalyzes the conversion of 5-methylorsellinic acid (5MOA) into the phthalide compound 5,7-dihydroxy-4,6-dimethylphthalide (DHMP) (PubMed:31209052). MpaDE' first catalyzes hydroxylation of 5-MOA to 4,6-dihydroxy-2-(hydroxymethyl)-3-methylbenzoic acid (DHMB), and then acts as a lactone synthase that catalyzes the ring closure to convert DHMB into DHMP (PubMed:31209052). The first step of the pathway is the synthesis of 5-methylorsellinic acid (5MOA) by the cytosolic polyketide synthase mpaC. 5MOA is then converted to the phthalide compound 5,7-dihydroxy-4,6-dimethylphthalide (DHMP) by the endoplasmic reticulum-bound cytochrome P450 monooxygenase mpaDE. MpaDE first catalyzes hydroxylation of 5-MOA to 4,6-dihydroxy-2-(hydroxymethyl)-3-methylbenzoic acid (DHMB). MpaDE then acts as a lactone synthase that catalyzes the ring closure to convert DHMB into DHMP. The next step is the prenylation of DHMP by the Golgi apparatus-associated prenyltransferase mpaA to yield farnesyl-DHMP (FDHMP). The ER-bound oxygenase mpaB then mediates the oxidative cleavage the C19-C20 double bond in FDHMP to yield FDHMP-3C via a mycophenolic aldehyde intermediate. The O-methyltransferase mpaG catalyzes the methylation of FDHMP-3C to yield MFDHMP-3C. After the cytosolic methylation of FDHMP-3C, MFDHMP-3C enters into peroxisomes probably via free diffusion due to its low molecular weight. Upon a peroxisomal CoA ligation reaction, catalyzed by a beta-oxidation component enzyme acyl-CoA ligase ACL891, MFDHMP-3C-CoA would then be restricted to peroxisomes for the following beta-oxidation pathway steps. The peroxisomal beta-oxidation machinery than converts MFDHMP-3C-CoA into MPA_CoA, via a beta-oxidation chain-shortening process. Finally mpaH acts as a peroxisomal acyl-CoA hydrolase with high substrate specificity toward MPA-CoA to release the final product MPA (Probable) (PubMed:31209052).</text>
</comment>
<comment type="catalytic activity">
    <reaction evidence="3">
        <text>5-methylorsellinate + reduced [NADPH--hemoprotein reductase] + O2 = 4,6-dihydroxy-2-(hydroxymethyl)-3-methylbenzoate + oxidized [NADPH--hemoprotein reductase] + H2O + H(+)</text>
        <dbReference type="Rhea" id="RHEA:66668"/>
        <dbReference type="Rhea" id="RHEA-COMP:11964"/>
        <dbReference type="Rhea" id="RHEA-COMP:11965"/>
        <dbReference type="ChEBI" id="CHEBI:15377"/>
        <dbReference type="ChEBI" id="CHEBI:15378"/>
        <dbReference type="ChEBI" id="CHEBI:15379"/>
        <dbReference type="ChEBI" id="CHEBI:57618"/>
        <dbReference type="ChEBI" id="CHEBI:58210"/>
        <dbReference type="ChEBI" id="CHEBI:146172"/>
        <dbReference type="ChEBI" id="CHEBI:167385"/>
    </reaction>
    <physiologicalReaction direction="left-to-right" evidence="3">
        <dbReference type="Rhea" id="RHEA:66669"/>
    </physiologicalReaction>
</comment>
<comment type="catalytic activity">
    <reaction evidence="3">
        <text>4,6-dihydroxy-2-(hydroxymethyl)-3-methylbenzoate + H(+) = 5,7-dihydroxy-4-methylphthalide + H2O</text>
        <dbReference type="Rhea" id="RHEA:66672"/>
        <dbReference type="ChEBI" id="CHEBI:15377"/>
        <dbReference type="ChEBI" id="CHEBI:15378"/>
        <dbReference type="ChEBI" id="CHEBI:68194"/>
        <dbReference type="ChEBI" id="CHEBI:167385"/>
    </reaction>
    <physiologicalReaction direction="left-to-right" evidence="3">
        <dbReference type="Rhea" id="RHEA:66673"/>
    </physiologicalReaction>
</comment>
<comment type="cofactor">
    <cofactor evidence="1">
        <name>heme</name>
        <dbReference type="ChEBI" id="CHEBI:30413"/>
    </cofactor>
</comment>
<comment type="pathway">
    <text evidence="3">Secondary metabolite biosynthesis; terpenoid biosynthesis.</text>
</comment>
<comment type="subcellular location">
    <subcellularLocation>
        <location evidence="3">Endoplasmic reticulum membrane</location>
        <topology evidence="2">Single-pass membrane protein</topology>
    </subcellularLocation>
</comment>
<comment type="similarity">
    <text evidence="5">Belongs to the cytochrome P450 family.</text>
</comment>